<gene>
    <name evidence="1" type="primary">uppP</name>
    <name type="synonym">bacA</name>
    <name type="synonym">upk</name>
    <name type="ordered locus">glr3281</name>
</gene>
<protein>
    <recommendedName>
        <fullName evidence="1">Undecaprenyl-diphosphatase</fullName>
        <ecNumber evidence="1">3.6.1.27</ecNumber>
    </recommendedName>
    <alternativeName>
        <fullName evidence="1">Bacitracin resistance protein</fullName>
    </alternativeName>
    <alternativeName>
        <fullName evidence="1">Undecaprenyl pyrophosphate phosphatase</fullName>
    </alternativeName>
</protein>
<evidence type="ECO:0000255" key="1">
    <source>
        <dbReference type="HAMAP-Rule" id="MF_01006"/>
    </source>
</evidence>
<keyword id="KW-0046">Antibiotic resistance</keyword>
<keyword id="KW-0997">Cell inner membrane</keyword>
<keyword id="KW-1003">Cell membrane</keyword>
<keyword id="KW-0133">Cell shape</keyword>
<keyword id="KW-0961">Cell wall biogenesis/degradation</keyword>
<keyword id="KW-0378">Hydrolase</keyword>
<keyword id="KW-0472">Membrane</keyword>
<keyword id="KW-0573">Peptidoglycan synthesis</keyword>
<keyword id="KW-1185">Reference proteome</keyword>
<keyword id="KW-0812">Transmembrane</keyword>
<keyword id="KW-1133">Transmembrane helix</keyword>
<name>UPPP_GLOVI</name>
<sequence length="290" mass="30881">MQQQIGIFEAIVLGFVQGITEYFPISSTAHLRVVPALLGWADPGTAYSAVIQLGSLLAVLTYFYKDLVEILSGTVRALRTGDTQSREVRLFWGIILGTIPIVIAGLALKSTLEAPGSPLRALSVIAVASIVMAALLWLSESLGKRTRTMKGIRVIDGILIGCAQALALVPGVSRSGSTLTAALFLGFQRADGARFSFLLAIPAIFLSGLLELKVLVDEGFSGGIGPIVAGFVSSTVFSYLAIAWLLKFLQTRSTLVFVIYRFFFGALLLGLLAAGLLPDIEPVRQALNLP</sequence>
<dbReference type="EC" id="3.6.1.27" evidence="1"/>
<dbReference type="EMBL" id="BA000045">
    <property type="protein sequence ID" value="BAC91222.1"/>
    <property type="molecule type" value="Genomic_DNA"/>
</dbReference>
<dbReference type="RefSeq" id="NP_926227.1">
    <property type="nucleotide sequence ID" value="NC_005125.1"/>
</dbReference>
<dbReference type="RefSeq" id="WP_011143271.1">
    <property type="nucleotide sequence ID" value="NC_005125.1"/>
</dbReference>
<dbReference type="SMR" id="Q7NG92"/>
<dbReference type="FunCoup" id="Q7NG92">
    <property type="interactions" value="7"/>
</dbReference>
<dbReference type="STRING" id="251221.gene:10760791"/>
<dbReference type="EnsemblBacteria" id="BAC91222">
    <property type="protein sequence ID" value="BAC91222"/>
    <property type="gene ID" value="BAC91222"/>
</dbReference>
<dbReference type="KEGG" id="gvi:glr3281"/>
<dbReference type="PATRIC" id="fig|251221.4.peg.3313"/>
<dbReference type="eggNOG" id="COG1968">
    <property type="taxonomic scope" value="Bacteria"/>
</dbReference>
<dbReference type="HOGENOM" id="CLU_060296_1_0_3"/>
<dbReference type="InParanoid" id="Q7NG92"/>
<dbReference type="OrthoDB" id="9808289at2"/>
<dbReference type="PhylomeDB" id="Q7NG92"/>
<dbReference type="Proteomes" id="UP000000557">
    <property type="component" value="Chromosome"/>
</dbReference>
<dbReference type="GO" id="GO:0005886">
    <property type="term" value="C:plasma membrane"/>
    <property type="evidence" value="ECO:0000318"/>
    <property type="project" value="GO_Central"/>
</dbReference>
<dbReference type="GO" id="GO:0050380">
    <property type="term" value="F:undecaprenyl-diphosphatase activity"/>
    <property type="evidence" value="ECO:0000318"/>
    <property type="project" value="GO_Central"/>
</dbReference>
<dbReference type="GO" id="GO:0071555">
    <property type="term" value="P:cell wall organization"/>
    <property type="evidence" value="ECO:0007669"/>
    <property type="project" value="UniProtKB-KW"/>
</dbReference>
<dbReference type="GO" id="GO:0009252">
    <property type="term" value="P:peptidoglycan biosynthetic process"/>
    <property type="evidence" value="ECO:0007669"/>
    <property type="project" value="UniProtKB-KW"/>
</dbReference>
<dbReference type="GO" id="GO:0000270">
    <property type="term" value="P:peptidoglycan metabolic process"/>
    <property type="evidence" value="ECO:0000318"/>
    <property type="project" value="GO_Central"/>
</dbReference>
<dbReference type="GO" id="GO:0008360">
    <property type="term" value="P:regulation of cell shape"/>
    <property type="evidence" value="ECO:0007669"/>
    <property type="project" value="UniProtKB-KW"/>
</dbReference>
<dbReference type="GO" id="GO:0046677">
    <property type="term" value="P:response to antibiotic"/>
    <property type="evidence" value="ECO:0007669"/>
    <property type="project" value="UniProtKB-UniRule"/>
</dbReference>
<dbReference type="HAMAP" id="MF_01006">
    <property type="entry name" value="Undec_diphosphatase"/>
    <property type="match status" value="1"/>
</dbReference>
<dbReference type="InterPro" id="IPR003824">
    <property type="entry name" value="UppP"/>
</dbReference>
<dbReference type="NCBIfam" id="NF001394">
    <property type="entry name" value="PRK00281.2-5"/>
    <property type="match status" value="1"/>
</dbReference>
<dbReference type="NCBIfam" id="TIGR00753">
    <property type="entry name" value="undec_PP_bacA"/>
    <property type="match status" value="1"/>
</dbReference>
<dbReference type="PANTHER" id="PTHR30622">
    <property type="entry name" value="UNDECAPRENYL-DIPHOSPHATASE"/>
    <property type="match status" value="1"/>
</dbReference>
<dbReference type="PANTHER" id="PTHR30622:SF4">
    <property type="entry name" value="UNDECAPRENYL-DIPHOSPHATASE"/>
    <property type="match status" value="1"/>
</dbReference>
<dbReference type="Pfam" id="PF02673">
    <property type="entry name" value="BacA"/>
    <property type="match status" value="1"/>
</dbReference>
<comment type="function">
    <text evidence="1">Catalyzes the dephosphorylation of undecaprenyl diphosphate (UPP). Confers resistance to bacitracin.</text>
</comment>
<comment type="catalytic activity">
    <reaction evidence="1">
        <text>di-trans,octa-cis-undecaprenyl diphosphate + H2O = di-trans,octa-cis-undecaprenyl phosphate + phosphate + H(+)</text>
        <dbReference type="Rhea" id="RHEA:28094"/>
        <dbReference type="ChEBI" id="CHEBI:15377"/>
        <dbReference type="ChEBI" id="CHEBI:15378"/>
        <dbReference type="ChEBI" id="CHEBI:43474"/>
        <dbReference type="ChEBI" id="CHEBI:58405"/>
        <dbReference type="ChEBI" id="CHEBI:60392"/>
        <dbReference type="EC" id="3.6.1.27"/>
    </reaction>
</comment>
<comment type="subcellular location">
    <subcellularLocation>
        <location evidence="1">Cell inner membrane</location>
        <topology evidence="1">Multi-pass membrane protein</topology>
    </subcellularLocation>
</comment>
<comment type="miscellaneous">
    <text>Bacitracin is thought to be involved in the inhibition of peptidoglycan synthesis by sequestering undecaprenyl diphosphate, thereby reducing the pool of lipid carrier available.</text>
</comment>
<comment type="similarity">
    <text evidence="1">Belongs to the UppP family.</text>
</comment>
<accession>Q7NG92</accession>
<feature type="chain" id="PRO_0000151155" description="Undecaprenyl-diphosphatase">
    <location>
        <begin position="1"/>
        <end position="290"/>
    </location>
</feature>
<feature type="transmembrane region" description="Helical" evidence="1">
    <location>
        <begin position="5"/>
        <end position="25"/>
    </location>
</feature>
<feature type="transmembrane region" description="Helical" evidence="1">
    <location>
        <begin position="44"/>
        <end position="64"/>
    </location>
</feature>
<feature type="transmembrane region" description="Helical" evidence="1">
    <location>
        <begin position="88"/>
        <end position="108"/>
    </location>
</feature>
<feature type="transmembrane region" description="Helical" evidence="1">
    <location>
        <begin position="122"/>
        <end position="142"/>
    </location>
</feature>
<feature type="transmembrane region" description="Helical" evidence="1">
    <location>
        <begin position="152"/>
        <end position="172"/>
    </location>
</feature>
<feature type="transmembrane region" description="Helical" evidence="1">
    <location>
        <begin position="195"/>
        <end position="215"/>
    </location>
</feature>
<feature type="transmembrane region" description="Helical" evidence="1">
    <location>
        <begin position="226"/>
        <end position="246"/>
    </location>
</feature>
<feature type="transmembrane region" description="Helical" evidence="1">
    <location>
        <begin position="255"/>
        <end position="275"/>
    </location>
</feature>
<reference key="1">
    <citation type="journal article" date="2003" name="DNA Res.">
        <title>Complete genome structure of Gloeobacter violaceus PCC 7421, a cyanobacterium that lacks thylakoids.</title>
        <authorList>
            <person name="Nakamura Y."/>
            <person name="Kaneko T."/>
            <person name="Sato S."/>
            <person name="Mimuro M."/>
            <person name="Miyashita H."/>
            <person name="Tsuchiya T."/>
            <person name="Sasamoto S."/>
            <person name="Watanabe A."/>
            <person name="Kawashima K."/>
            <person name="Kishida Y."/>
            <person name="Kiyokawa C."/>
            <person name="Kohara M."/>
            <person name="Matsumoto M."/>
            <person name="Matsuno A."/>
            <person name="Nakazaki N."/>
            <person name="Shimpo S."/>
            <person name="Takeuchi C."/>
            <person name="Yamada M."/>
            <person name="Tabata S."/>
        </authorList>
    </citation>
    <scope>NUCLEOTIDE SEQUENCE [LARGE SCALE GENOMIC DNA]</scope>
    <source>
        <strain>ATCC 29082 / PCC 7421</strain>
    </source>
</reference>
<organism>
    <name type="scientific">Gloeobacter violaceus (strain ATCC 29082 / PCC 7421)</name>
    <dbReference type="NCBI Taxonomy" id="251221"/>
    <lineage>
        <taxon>Bacteria</taxon>
        <taxon>Bacillati</taxon>
        <taxon>Cyanobacteriota</taxon>
        <taxon>Cyanophyceae</taxon>
        <taxon>Gloeobacterales</taxon>
        <taxon>Gloeobacteraceae</taxon>
        <taxon>Gloeobacter</taxon>
    </lineage>
</organism>
<proteinExistence type="inferred from homology"/>